<name>MOAA_BRUME</name>
<gene>
    <name evidence="1" type="primary">moaA</name>
    <name type="ordered locus">BMEI1019</name>
</gene>
<proteinExistence type="inferred from homology"/>
<comment type="function">
    <text evidence="1">Catalyzes the cyclization of GTP to (8S)-3',8-cyclo-7,8-dihydroguanosine 5'-triphosphate.</text>
</comment>
<comment type="catalytic activity">
    <reaction evidence="1">
        <text>GTP + AH2 + S-adenosyl-L-methionine = (8S)-3',8-cyclo-7,8-dihydroguanosine 5'-triphosphate + 5'-deoxyadenosine + L-methionine + A + H(+)</text>
        <dbReference type="Rhea" id="RHEA:49576"/>
        <dbReference type="ChEBI" id="CHEBI:13193"/>
        <dbReference type="ChEBI" id="CHEBI:15378"/>
        <dbReference type="ChEBI" id="CHEBI:17319"/>
        <dbReference type="ChEBI" id="CHEBI:17499"/>
        <dbReference type="ChEBI" id="CHEBI:37565"/>
        <dbReference type="ChEBI" id="CHEBI:57844"/>
        <dbReference type="ChEBI" id="CHEBI:59789"/>
        <dbReference type="ChEBI" id="CHEBI:131766"/>
        <dbReference type="EC" id="4.1.99.22"/>
    </reaction>
</comment>
<comment type="cofactor">
    <cofactor evidence="1">
        <name>[4Fe-4S] cluster</name>
        <dbReference type="ChEBI" id="CHEBI:49883"/>
    </cofactor>
    <text evidence="1">Binds 2 [4Fe-4S] clusters. Binds 1 [4Fe-4S] cluster coordinated with 3 cysteines and an exchangeable S-adenosyl-L-methionine and 1 [4Fe-4S] cluster coordinated with 3 cysteines and the GTP-derived substrate.</text>
</comment>
<comment type="pathway">
    <text evidence="1">Cofactor biosynthesis; molybdopterin biosynthesis.</text>
</comment>
<comment type="subunit">
    <text evidence="1">Monomer and homodimer.</text>
</comment>
<comment type="similarity">
    <text evidence="1">Belongs to the radical SAM superfamily. MoaA family.</text>
</comment>
<evidence type="ECO:0000255" key="1">
    <source>
        <dbReference type="HAMAP-Rule" id="MF_01225"/>
    </source>
</evidence>
<evidence type="ECO:0000255" key="2">
    <source>
        <dbReference type="PROSITE-ProRule" id="PRU01266"/>
    </source>
</evidence>
<accession>Q8YGY6</accession>
<dbReference type="EC" id="4.1.99.22" evidence="1"/>
<dbReference type="EMBL" id="AE008917">
    <property type="protein sequence ID" value="AAL52200.1"/>
    <property type="molecule type" value="Genomic_DNA"/>
</dbReference>
<dbReference type="PIR" id="AE3379">
    <property type="entry name" value="AE3379"/>
</dbReference>
<dbReference type="RefSeq" id="WP_004683730.1">
    <property type="nucleotide sequence ID" value="NZ_GG703778.1"/>
</dbReference>
<dbReference type="SMR" id="Q8YGY6"/>
<dbReference type="GeneID" id="29593845"/>
<dbReference type="KEGG" id="bme:BMEI1019"/>
<dbReference type="eggNOG" id="COG2896">
    <property type="taxonomic scope" value="Bacteria"/>
</dbReference>
<dbReference type="UniPathway" id="UPA00344"/>
<dbReference type="PRO" id="PR:Q8YGY6"/>
<dbReference type="Proteomes" id="UP000000419">
    <property type="component" value="Chromosome I"/>
</dbReference>
<dbReference type="GO" id="GO:0051539">
    <property type="term" value="F:4 iron, 4 sulfur cluster binding"/>
    <property type="evidence" value="ECO:0007669"/>
    <property type="project" value="UniProtKB-UniRule"/>
</dbReference>
<dbReference type="GO" id="GO:0061799">
    <property type="term" value="F:cyclic pyranopterin monophosphate synthase activity"/>
    <property type="evidence" value="ECO:0007669"/>
    <property type="project" value="TreeGrafter"/>
</dbReference>
<dbReference type="GO" id="GO:0061798">
    <property type="term" value="F:GTP 3',8'-cyclase activity"/>
    <property type="evidence" value="ECO:0007669"/>
    <property type="project" value="UniProtKB-UniRule"/>
</dbReference>
<dbReference type="GO" id="GO:0005525">
    <property type="term" value="F:GTP binding"/>
    <property type="evidence" value="ECO:0007669"/>
    <property type="project" value="UniProtKB-UniRule"/>
</dbReference>
<dbReference type="GO" id="GO:0046872">
    <property type="term" value="F:metal ion binding"/>
    <property type="evidence" value="ECO:0007669"/>
    <property type="project" value="UniProtKB-KW"/>
</dbReference>
<dbReference type="GO" id="GO:1904047">
    <property type="term" value="F:S-adenosyl-L-methionine binding"/>
    <property type="evidence" value="ECO:0007669"/>
    <property type="project" value="UniProtKB-UniRule"/>
</dbReference>
<dbReference type="GO" id="GO:0006777">
    <property type="term" value="P:Mo-molybdopterin cofactor biosynthetic process"/>
    <property type="evidence" value="ECO:0007669"/>
    <property type="project" value="UniProtKB-UniRule"/>
</dbReference>
<dbReference type="CDD" id="cd01335">
    <property type="entry name" value="Radical_SAM"/>
    <property type="match status" value="1"/>
</dbReference>
<dbReference type="CDD" id="cd21117">
    <property type="entry name" value="Twitch_MoaA"/>
    <property type="match status" value="1"/>
</dbReference>
<dbReference type="Gene3D" id="3.20.20.70">
    <property type="entry name" value="Aldolase class I"/>
    <property type="match status" value="1"/>
</dbReference>
<dbReference type="HAMAP" id="MF_01225_B">
    <property type="entry name" value="MoaA_B"/>
    <property type="match status" value="1"/>
</dbReference>
<dbReference type="InterPro" id="IPR013785">
    <property type="entry name" value="Aldolase_TIM"/>
</dbReference>
<dbReference type="InterPro" id="IPR006638">
    <property type="entry name" value="Elp3/MiaA/NifB-like_rSAM"/>
</dbReference>
<dbReference type="InterPro" id="IPR013483">
    <property type="entry name" value="MoaA"/>
</dbReference>
<dbReference type="InterPro" id="IPR000385">
    <property type="entry name" value="MoaA_NifB_PqqE_Fe-S-bd_CS"/>
</dbReference>
<dbReference type="InterPro" id="IPR010505">
    <property type="entry name" value="MoaA_twitch"/>
</dbReference>
<dbReference type="InterPro" id="IPR050105">
    <property type="entry name" value="MoCo_biosynth_MoaA/MoaC"/>
</dbReference>
<dbReference type="InterPro" id="IPR007197">
    <property type="entry name" value="rSAM"/>
</dbReference>
<dbReference type="NCBIfam" id="TIGR02666">
    <property type="entry name" value="moaA"/>
    <property type="match status" value="1"/>
</dbReference>
<dbReference type="PANTHER" id="PTHR22960:SF0">
    <property type="entry name" value="MOLYBDENUM COFACTOR BIOSYNTHESIS PROTEIN 1"/>
    <property type="match status" value="1"/>
</dbReference>
<dbReference type="PANTHER" id="PTHR22960">
    <property type="entry name" value="MOLYBDOPTERIN COFACTOR SYNTHESIS PROTEIN A"/>
    <property type="match status" value="1"/>
</dbReference>
<dbReference type="Pfam" id="PF13353">
    <property type="entry name" value="Fer4_12"/>
    <property type="match status" value="1"/>
</dbReference>
<dbReference type="Pfam" id="PF06463">
    <property type="entry name" value="Mob_synth_C"/>
    <property type="match status" value="1"/>
</dbReference>
<dbReference type="Pfam" id="PF04055">
    <property type="entry name" value="Radical_SAM"/>
    <property type="match status" value="1"/>
</dbReference>
<dbReference type="SFLD" id="SFLDG01383">
    <property type="entry name" value="cyclic_pyranopterin_phosphate"/>
    <property type="match status" value="1"/>
</dbReference>
<dbReference type="SFLD" id="SFLDG01386">
    <property type="entry name" value="main_SPASM_domain-containing"/>
    <property type="match status" value="1"/>
</dbReference>
<dbReference type="SMART" id="SM00729">
    <property type="entry name" value="Elp3"/>
    <property type="match status" value="1"/>
</dbReference>
<dbReference type="SUPFAM" id="SSF102114">
    <property type="entry name" value="Radical SAM enzymes"/>
    <property type="match status" value="1"/>
</dbReference>
<dbReference type="PROSITE" id="PS01305">
    <property type="entry name" value="MOAA_NIFB_PQQE"/>
    <property type="match status" value="1"/>
</dbReference>
<dbReference type="PROSITE" id="PS51918">
    <property type="entry name" value="RADICAL_SAM"/>
    <property type="match status" value="1"/>
</dbReference>
<protein>
    <recommendedName>
        <fullName evidence="1">GTP 3',8-cyclase</fullName>
        <ecNumber evidence="1">4.1.99.22</ecNumber>
    </recommendedName>
    <alternativeName>
        <fullName evidence="1">Molybdenum cofactor biosynthesis protein A</fullName>
    </alternativeName>
</protein>
<reference key="1">
    <citation type="journal article" date="2002" name="Proc. Natl. Acad. Sci. U.S.A.">
        <title>The genome sequence of the facultative intracellular pathogen Brucella melitensis.</title>
        <authorList>
            <person name="DelVecchio V.G."/>
            <person name="Kapatral V."/>
            <person name="Redkar R.J."/>
            <person name="Patra G."/>
            <person name="Mujer C."/>
            <person name="Los T."/>
            <person name="Ivanova N."/>
            <person name="Anderson I."/>
            <person name="Bhattacharyya A."/>
            <person name="Lykidis A."/>
            <person name="Reznik G."/>
            <person name="Jablonski L."/>
            <person name="Larsen N."/>
            <person name="D'Souza M."/>
            <person name="Bernal A."/>
            <person name="Mazur M."/>
            <person name="Goltsman E."/>
            <person name="Selkov E."/>
            <person name="Elzer P.H."/>
            <person name="Hagius S."/>
            <person name="O'Callaghan D."/>
            <person name="Letesson J.-J."/>
            <person name="Haselkorn R."/>
            <person name="Kyrpides N.C."/>
            <person name="Overbeek R."/>
        </authorList>
    </citation>
    <scope>NUCLEOTIDE SEQUENCE [LARGE SCALE GENOMIC DNA]</scope>
    <source>
        <strain>ATCC 23456 / CCUG 17765 / NCTC 10094 / 16M</strain>
    </source>
</reference>
<feature type="chain" id="PRO_0000152950" description="GTP 3',8-cyclase">
    <location>
        <begin position="1"/>
        <end position="344"/>
    </location>
</feature>
<feature type="domain" description="Radical SAM core" evidence="2">
    <location>
        <begin position="19"/>
        <end position="245"/>
    </location>
</feature>
<feature type="binding site" evidence="1">
    <location>
        <position position="28"/>
    </location>
    <ligand>
        <name>GTP</name>
        <dbReference type="ChEBI" id="CHEBI:37565"/>
    </ligand>
</feature>
<feature type="binding site" evidence="1">
    <location>
        <position position="35"/>
    </location>
    <ligand>
        <name>[4Fe-4S] cluster</name>
        <dbReference type="ChEBI" id="CHEBI:49883"/>
        <label>1</label>
        <note>4Fe-4S-S-AdoMet</note>
    </ligand>
</feature>
<feature type="binding site" evidence="1">
    <location>
        <position position="39"/>
    </location>
    <ligand>
        <name>[4Fe-4S] cluster</name>
        <dbReference type="ChEBI" id="CHEBI:49883"/>
        <label>1</label>
        <note>4Fe-4S-S-AdoMet</note>
    </ligand>
</feature>
<feature type="binding site" evidence="1">
    <location>
        <position position="41"/>
    </location>
    <ligand>
        <name>S-adenosyl-L-methionine</name>
        <dbReference type="ChEBI" id="CHEBI:59789"/>
    </ligand>
</feature>
<feature type="binding site" evidence="1">
    <location>
        <position position="42"/>
    </location>
    <ligand>
        <name>[4Fe-4S] cluster</name>
        <dbReference type="ChEBI" id="CHEBI:49883"/>
        <label>1</label>
        <note>4Fe-4S-S-AdoMet</note>
    </ligand>
</feature>
<feature type="binding site" evidence="1">
    <location>
        <position position="77"/>
    </location>
    <ligand>
        <name>GTP</name>
        <dbReference type="ChEBI" id="CHEBI:37565"/>
    </ligand>
</feature>
<feature type="binding site" evidence="1">
    <location>
        <position position="81"/>
    </location>
    <ligand>
        <name>S-adenosyl-L-methionine</name>
        <dbReference type="ChEBI" id="CHEBI:59789"/>
    </ligand>
</feature>
<feature type="binding site" evidence="1">
    <location>
        <position position="111"/>
    </location>
    <ligand>
        <name>GTP</name>
        <dbReference type="ChEBI" id="CHEBI:37565"/>
    </ligand>
</feature>
<feature type="binding site" evidence="1">
    <location>
        <position position="135"/>
    </location>
    <ligand>
        <name>S-adenosyl-L-methionine</name>
        <dbReference type="ChEBI" id="CHEBI:59789"/>
    </ligand>
</feature>
<feature type="binding site" evidence="1">
    <location>
        <position position="171"/>
    </location>
    <ligand>
        <name>GTP</name>
        <dbReference type="ChEBI" id="CHEBI:37565"/>
    </ligand>
</feature>
<feature type="binding site" evidence="1">
    <location>
        <position position="205"/>
    </location>
    <ligand>
        <name>S-adenosyl-L-methionine</name>
        <dbReference type="ChEBI" id="CHEBI:59789"/>
    </ligand>
</feature>
<feature type="binding site" evidence="1">
    <location>
        <position position="268"/>
    </location>
    <ligand>
        <name>[4Fe-4S] cluster</name>
        <dbReference type="ChEBI" id="CHEBI:49883"/>
        <label>2</label>
        <note>4Fe-4S-substrate</note>
    </ligand>
</feature>
<feature type="binding site" evidence="1">
    <location>
        <position position="271"/>
    </location>
    <ligand>
        <name>[4Fe-4S] cluster</name>
        <dbReference type="ChEBI" id="CHEBI:49883"/>
        <label>2</label>
        <note>4Fe-4S-substrate</note>
    </ligand>
</feature>
<feature type="binding site" evidence="1">
    <location>
        <begin position="273"/>
        <end position="275"/>
    </location>
    <ligand>
        <name>GTP</name>
        <dbReference type="ChEBI" id="CHEBI:37565"/>
    </ligand>
</feature>
<feature type="binding site" evidence="1">
    <location>
        <position position="285"/>
    </location>
    <ligand>
        <name>[4Fe-4S] cluster</name>
        <dbReference type="ChEBI" id="CHEBI:49883"/>
        <label>2</label>
        <note>4Fe-4S-substrate</note>
    </ligand>
</feature>
<keyword id="KW-0004">4Fe-4S</keyword>
<keyword id="KW-0342">GTP-binding</keyword>
<keyword id="KW-0408">Iron</keyword>
<keyword id="KW-0411">Iron-sulfur</keyword>
<keyword id="KW-0456">Lyase</keyword>
<keyword id="KW-0479">Metal-binding</keyword>
<keyword id="KW-0501">Molybdenum cofactor biosynthesis</keyword>
<keyword id="KW-0547">Nucleotide-binding</keyword>
<keyword id="KW-0949">S-adenosyl-L-methionine</keyword>
<sequence length="344" mass="38629">MRNVQAQPLVSPTEPMIDPFGRAVTYLRVSVTDRCDFRCTYCMAEHMTFLPKKDLLTLEELDRLCSVFIEKGVRKLRLTGGEPLVRKNIMHLIGNLSRHLKSGALDELTLTTNGSQLARFAGELADCGVRRINVSLDTLNPEKFRTITRWGDLSRVLEGIDAAQKAGIHVKINAVALKDFNDAEIPELIRWAHGRGMDVTLIETMPMGEIEFDRTDQYLPLSQVRADLASQFTLADIPYRTGGPARYVTISETGGRLGFITPMTYNFCESCNRVRLTCTGMLYMCLGQNDDADLRKALRESESDEHLSQAIDEAISRKPKGHDFIIDREHNRPSVARHMSLTGG</sequence>
<organism>
    <name type="scientific">Brucella melitensis biotype 1 (strain ATCC 23456 / CCUG 17765 / NCTC 10094 / 16M)</name>
    <dbReference type="NCBI Taxonomy" id="224914"/>
    <lineage>
        <taxon>Bacteria</taxon>
        <taxon>Pseudomonadati</taxon>
        <taxon>Pseudomonadota</taxon>
        <taxon>Alphaproteobacteria</taxon>
        <taxon>Hyphomicrobiales</taxon>
        <taxon>Brucellaceae</taxon>
        <taxon>Brucella/Ochrobactrum group</taxon>
        <taxon>Brucella</taxon>
    </lineage>
</organism>